<organism>
    <name type="scientific">Rickettsia conorii (strain ATCC VR-613 / Malish 7)</name>
    <dbReference type="NCBI Taxonomy" id="272944"/>
    <lineage>
        <taxon>Bacteria</taxon>
        <taxon>Pseudomonadati</taxon>
        <taxon>Pseudomonadota</taxon>
        <taxon>Alphaproteobacteria</taxon>
        <taxon>Rickettsiales</taxon>
        <taxon>Rickettsiaceae</taxon>
        <taxon>Rickettsieae</taxon>
        <taxon>Rickettsia</taxon>
        <taxon>spotted fever group</taxon>
    </lineage>
</organism>
<sequence length="51" mass="5983">MILLMCLTSYRKNRRAYKKEFEAMLKCEEGDLSCPFIIKTQNLGFFVDISS</sequence>
<dbReference type="EMBL" id="AE006914">
    <property type="protein sequence ID" value="AAL02608.1"/>
    <property type="molecule type" value="Genomic_DNA"/>
</dbReference>
<dbReference type="PIR" id="F97708">
    <property type="entry name" value="F97708"/>
</dbReference>
<dbReference type="SMR" id="Q92JJ7"/>
<dbReference type="KEGG" id="rco:RC0070"/>
<dbReference type="HOGENOM" id="CLU_214967_0_0_5"/>
<dbReference type="Proteomes" id="UP000000816">
    <property type="component" value="Chromosome"/>
</dbReference>
<name>Y070_RICCN</name>
<gene>
    <name type="ordered locus">RC0070</name>
</gene>
<protein>
    <recommendedName>
        <fullName>Uncharacterized protein RC0070</fullName>
    </recommendedName>
</protein>
<reference key="1">
    <citation type="journal article" date="2001" name="Science">
        <title>Mechanisms of evolution in Rickettsia conorii and R. prowazekii.</title>
        <authorList>
            <person name="Ogata H."/>
            <person name="Audic S."/>
            <person name="Renesto-Audiffren P."/>
            <person name="Fournier P.-E."/>
            <person name="Barbe V."/>
            <person name="Samson D."/>
            <person name="Roux V."/>
            <person name="Cossart P."/>
            <person name="Weissenbach J."/>
            <person name="Claverie J.-M."/>
            <person name="Raoult D."/>
        </authorList>
    </citation>
    <scope>NUCLEOTIDE SEQUENCE [LARGE SCALE GENOMIC DNA]</scope>
    <source>
        <strain>ATCC VR-613 / Malish 7</strain>
    </source>
</reference>
<accession>Q92JJ7</accession>
<feature type="chain" id="PRO_0000101448" description="Uncharacterized protein RC0070">
    <location>
        <begin position="1"/>
        <end position="51"/>
    </location>
</feature>
<proteinExistence type="predicted"/>